<reference key="1">
    <citation type="journal article" date="2009" name="Genome Biol.">
        <title>Comparative genome and phenotypic analysis of Clostridium difficile 027 strains provides insight into the evolution of a hypervirulent bacterium.</title>
        <authorList>
            <person name="Stabler R.A."/>
            <person name="He M."/>
            <person name="Dawson L."/>
            <person name="Martin M."/>
            <person name="Valiente E."/>
            <person name="Corton C."/>
            <person name="Lawley T.D."/>
            <person name="Sebaihia M."/>
            <person name="Quail M.A."/>
            <person name="Rose G."/>
            <person name="Gerding D.N."/>
            <person name="Gibert M."/>
            <person name="Popoff M.R."/>
            <person name="Parkhill J."/>
            <person name="Dougan G."/>
            <person name="Wren B.W."/>
        </authorList>
    </citation>
    <scope>NUCLEOTIDE SEQUENCE [LARGE SCALE GENOMIC DNA]</scope>
    <source>
        <strain>R20291</strain>
    </source>
</reference>
<comment type="function">
    <text evidence="1">Part of the energy-coupling factor (ECF) transporter complex CbiMNOQ involved in cobalt import.</text>
</comment>
<comment type="pathway">
    <text evidence="1">Cofactor biosynthesis; adenosylcobalamin biosynthesis.</text>
</comment>
<comment type="subunit">
    <text evidence="1">Forms an energy-coupling factor (ECF) transporter complex composed of an ATP-binding protein (A component, CbiO), a transmembrane protein (T component, CbiQ) and 2 possible substrate-capture proteins (S components, CbiM and CbiN) of unknown stoichimetry.</text>
</comment>
<comment type="subcellular location">
    <subcellularLocation>
        <location evidence="1">Cell membrane</location>
        <topology evidence="1">Multi-pass membrane protein</topology>
    </subcellularLocation>
</comment>
<comment type="similarity">
    <text evidence="1">Belongs to the CbiM family.</text>
</comment>
<organism>
    <name type="scientific">Clostridioides difficile (strain R20291)</name>
    <name type="common">Peptoclostridium difficile</name>
    <dbReference type="NCBI Taxonomy" id="645463"/>
    <lineage>
        <taxon>Bacteria</taxon>
        <taxon>Bacillati</taxon>
        <taxon>Bacillota</taxon>
        <taxon>Clostridia</taxon>
        <taxon>Peptostreptococcales</taxon>
        <taxon>Peptostreptococcaceae</taxon>
        <taxon>Clostridioides</taxon>
    </lineage>
</organism>
<dbReference type="EMBL" id="FN545816">
    <property type="protein sequence ID" value="CBE02032.1"/>
    <property type="molecule type" value="Genomic_DNA"/>
</dbReference>
<dbReference type="RefSeq" id="WP_009888182.1">
    <property type="nucleotide sequence ID" value="NZ_CP115183.1"/>
</dbReference>
<dbReference type="SMR" id="C9YID6"/>
<dbReference type="KEGG" id="cdl:CDR20291_0329"/>
<dbReference type="HOGENOM" id="CLU_052508_3_0_9"/>
<dbReference type="UniPathway" id="UPA00148"/>
<dbReference type="Proteomes" id="UP000002070">
    <property type="component" value="Chromosome"/>
</dbReference>
<dbReference type="GO" id="GO:0043190">
    <property type="term" value="C:ATP-binding cassette (ABC) transporter complex"/>
    <property type="evidence" value="ECO:0007669"/>
    <property type="project" value="InterPro"/>
</dbReference>
<dbReference type="GO" id="GO:0015087">
    <property type="term" value="F:cobalt ion transmembrane transporter activity"/>
    <property type="evidence" value="ECO:0007669"/>
    <property type="project" value="UniProtKB-UniRule"/>
</dbReference>
<dbReference type="GO" id="GO:0009236">
    <property type="term" value="P:cobalamin biosynthetic process"/>
    <property type="evidence" value="ECO:0007669"/>
    <property type="project" value="UniProtKB-UniRule"/>
</dbReference>
<dbReference type="FunFam" id="1.10.1760.20:FF:000001">
    <property type="entry name" value="Cobalt transport protein CbiM"/>
    <property type="match status" value="1"/>
</dbReference>
<dbReference type="Gene3D" id="1.10.1760.20">
    <property type="match status" value="1"/>
</dbReference>
<dbReference type="HAMAP" id="MF_01462">
    <property type="entry name" value="CbiM"/>
    <property type="match status" value="1"/>
</dbReference>
<dbReference type="InterPro" id="IPR018024">
    <property type="entry name" value="CbiM"/>
</dbReference>
<dbReference type="InterPro" id="IPR002751">
    <property type="entry name" value="CbiM/NikMN"/>
</dbReference>
<dbReference type="NCBIfam" id="TIGR00123">
    <property type="entry name" value="cbiM"/>
    <property type="match status" value="1"/>
</dbReference>
<dbReference type="NCBIfam" id="NF006184">
    <property type="entry name" value="PRK08319.1"/>
    <property type="match status" value="1"/>
</dbReference>
<dbReference type="PANTHER" id="PTHR43627">
    <property type="match status" value="1"/>
</dbReference>
<dbReference type="PANTHER" id="PTHR43627:SF1">
    <property type="entry name" value="COBALT TRANSPORT PROTEIN CBIM"/>
    <property type="match status" value="1"/>
</dbReference>
<dbReference type="Pfam" id="PF01891">
    <property type="entry name" value="CbiM"/>
    <property type="match status" value="1"/>
</dbReference>
<name>CBIM_CLODR</name>
<feature type="signal peptide" evidence="1">
    <location>
        <begin position="1"/>
        <end position="25"/>
    </location>
</feature>
<feature type="chain" id="PRO_0000411138" description="Cobalt transport protein CbiM">
    <location>
        <begin position="26"/>
        <end position="250"/>
    </location>
</feature>
<feature type="transmembrane region" description="Helical" evidence="1">
    <location>
        <begin position="33"/>
        <end position="53"/>
    </location>
</feature>
<feature type="transmembrane region" description="Helical" evidence="1">
    <location>
        <begin position="68"/>
        <end position="88"/>
    </location>
</feature>
<feature type="transmembrane region" description="Helical" evidence="1">
    <location>
        <begin position="100"/>
        <end position="120"/>
    </location>
</feature>
<feature type="transmembrane region" description="Helical" evidence="1">
    <location>
        <begin position="132"/>
        <end position="152"/>
    </location>
</feature>
<feature type="transmembrane region" description="Helical" evidence="1">
    <location>
        <begin position="163"/>
        <end position="183"/>
    </location>
</feature>
<feature type="transmembrane region" description="Helical" evidence="1">
    <location>
        <begin position="205"/>
        <end position="225"/>
    </location>
</feature>
<protein>
    <recommendedName>
        <fullName evidence="1">Cobalt transport protein CbiM</fullName>
    </recommendedName>
    <alternativeName>
        <fullName evidence="1">Energy-coupling factor transporter probable substrate-capture protein CbiM</fullName>
        <shortName evidence="1">ECF transporter S component CbiM</shortName>
    </alternativeName>
</protein>
<keyword id="KW-1003">Cell membrane</keyword>
<keyword id="KW-0169">Cobalamin biosynthesis</keyword>
<keyword id="KW-0170">Cobalt</keyword>
<keyword id="KW-0171">Cobalt transport</keyword>
<keyword id="KW-0406">Ion transport</keyword>
<keyword id="KW-0472">Membrane</keyword>
<keyword id="KW-0732">Signal</keyword>
<keyword id="KW-0812">Transmembrane</keyword>
<keyword id="KW-1133">Transmembrane helix</keyword>
<keyword id="KW-0813">Transport</keyword>
<accession>C9YID6</accession>
<sequence>MKQNIKLGVIAALMLIVLTPVTSNAMHIMEGYLPVKWSIAWGVIFIPFFLVGLKSIGKIVKQDPKKKVLLALCGAFVFVLSALKIPSVTGSCSHPTGVGLGAIMFGPSVMFVLGTIVLIFQALLLAHGGITTLGANAFSMAIIGPIISFLIFKALKKKDGNNAMPVFLAAAIGDLATYTVTSIQLALAFPDPSGGVMASAIKFLGIFFMTQIPIAIAEGILTVIVYNLITENGEKSILENNDKGVKANEC</sequence>
<evidence type="ECO:0000255" key="1">
    <source>
        <dbReference type="HAMAP-Rule" id="MF_01462"/>
    </source>
</evidence>
<proteinExistence type="inferred from homology"/>
<gene>
    <name evidence="1" type="primary">cbiM</name>
    <name type="ordered locus">CDR20291_0329</name>
</gene>